<evidence type="ECO:0000255" key="1">
    <source>
        <dbReference type="HAMAP-Rule" id="MF_00115"/>
    </source>
</evidence>
<gene>
    <name evidence="1" type="primary">mscL</name>
    <name type="ordered locus">LACR_2403</name>
</gene>
<comment type="function">
    <text evidence="1">Channel that opens in response to stretch forces in the membrane lipid bilayer. May participate in the regulation of osmotic pressure changes within the cell.</text>
</comment>
<comment type="subunit">
    <text evidence="1">Homopentamer.</text>
</comment>
<comment type="subcellular location">
    <subcellularLocation>
        <location evidence="1">Cell membrane</location>
        <topology evidence="1">Multi-pass membrane protein</topology>
    </subcellularLocation>
</comment>
<comment type="similarity">
    <text evidence="1">Belongs to the MscL family.</text>
</comment>
<feature type="chain" id="PRO_1000015392" description="Large-conductance mechanosensitive channel">
    <location>
        <begin position="1"/>
        <end position="121"/>
    </location>
</feature>
<feature type="transmembrane region" description="Helical" evidence="1">
    <location>
        <begin position="14"/>
        <end position="34"/>
    </location>
</feature>
<feature type="transmembrane region" description="Helical" evidence="1">
    <location>
        <begin position="67"/>
        <end position="87"/>
    </location>
</feature>
<sequence>MLKEFKNFILRGNVLDLAVGVIIGAAFTALVKSLVDNLINPLIGMFVQSSALAHLSVTVGKTKFTYGAFLNDVINFVITAFVIFVLIKFINKLFPKKEEIVEEQKNEELETLQEIRDLLKK</sequence>
<reference key="1">
    <citation type="journal article" date="2006" name="Proc. Natl. Acad. Sci. U.S.A.">
        <title>Comparative genomics of the lactic acid bacteria.</title>
        <authorList>
            <person name="Makarova K.S."/>
            <person name="Slesarev A."/>
            <person name="Wolf Y.I."/>
            <person name="Sorokin A."/>
            <person name="Mirkin B."/>
            <person name="Koonin E.V."/>
            <person name="Pavlov A."/>
            <person name="Pavlova N."/>
            <person name="Karamychev V."/>
            <person name="Polouchine N."/>
            <person name="Shakhova V."/>
            <person name="Grigoriev I."/>
            <person name="Lou Y."/>
            <person name="Rohksar D."/>
            <person name="Lucas S."/>
            <person name="Huang K."/>
            <person name="Goodstein D.M."/>
            <person name="Hawkins T."/>
            <person name="Plengvidhya V."/>
            <person name="Welker D."/>
            <person name="Hughes J."/>
            <person name="Goh Y."/>
            <person name="Benson A."/>
            <person name="Baldwin K."/>
            <person name="Lee J.-H."/>
            <person name="Diaz-Muniz I."/>
            <person name="Dosti B."/>
            <person name="Smeianov V."/>
            <person name="Wechter W."/>
            <person name="Barabote R."/>
            <person name="Lorca G."/>
            <person name="Altermann E."/>
            <person name="Barrangou R."/>
            <person name="Ganesan B."/>
            <person name="Xie Y."/>
            <person name="Rawsthorne H."/>
            <person name="Tamir D."/>
            <person name="Parker C."/>
            <person name="Breidt F."/>
            <person name="Broadbent J.R."/>
            <person name="Hutkins R."/>
            <person name="O'Sullivan D."/>
            <person name="Steele J."/>
            <person name="Unlu G."/>
            <person name="Saier M.H. Jr."/>
            <person name="Klaenhammer T."/>
            <person name="Richardson P."/>
            <person name="Kozyavkin S."/>
            <person name="Weimer B.C."/>
            <person name="Mills D.A."/>
        </authorList>
    </citation>
    <scope>NUCLEOTIDE SEQUENCE [LARGE SCALE GENOMIC DNA]</scope>
    <source>
        <strain>SK11</strain>
    </source>
</reference>
<proteinExistence type="inferred from homology"/>
<protein>
    <recommendedName>
        <fullName evidence="1">Large-conductance mechanosensitive channel</fullName>
    </recommendedName>
</protein>
<accession>Q02W23</accession>
<organism>
    <name type="scientific">Lactococcus lactis subsp. cremoris (strain SK11)</name>
    <dbReference type="NCBI Taxonomy" id="272622"/>
    <lineage>
        <taxon>Bacteria</taxon>
        <taxon>Bacillati</taxon>
        <taxon>Bacillota</taxon>
        <taxon>Bacilli</taxon>
        <taxon>Lactobacillales</taxon>
        <taxon>Streptococcaceae</taxon>
        <taxon>Lactococcus</taxon>
        <taxon>Lactococcus cremoris subsp. cremoris</taxon>
    </lineage>
</organism>
<dbReference type="EMBL" id="CP000425">
    <property type="protein sequence ID" value="ABJ73849.1"/>
    <property type="molecule type" value="Genomic_DNA"/>
</dbReference>
<dbReference type="RefSeq" id="WP_011677163.1">
    <property type="nucleotide sequence ID" value="NC_008527.1"/>
</dbReference>
<dbReference type="SMR" id="Q02W23"/>
<dbReference type="KEGG" id="llc:LACR_2403"/>
<dbReference type="HOGENOM" id="CLU_095787_0_0_9"/>
<dbReference type="Proteomes" id="UP000000240">
    <property type="component" value="Chromosome"/>
</dbReference>
<dbReference type="GO" id="GO:0005886">
    <property type="term" value="C:plasma membrane"/>
    <property type="evidence" value="ECO:0007669"/>
    <property type="project" value="UniProtKB-SubCell"/>
</dbReference>
<dbReference type="GO" id="GO:0008381">
    <property type="term" value="F:mechanosensitive monoatomic ion channel activity"/>
    <property type="evidence" value="ECO:0007669"/>
    <property type="project" value="UniProtKB-UniRule"/>
</dbReference>
<dbReference type="Gene3D" id="1.10.1200.120">
    <property type="entry name" value="Large-conductance mechanosensitive channel, MscL, domain 1"/>
    <property type="match status" value="1"/>
</dbReference>
<dbReference type="HAMAP" id="MF_00115">
    <property type="entry name" value="MscL"/>
    <property type="match status" value="1"/>
</dbReference>
<dbReference type="InterPro" id="IPR019823">
    <property type="entry name" value="Mechanosensitive_channel_CS"/>
</dbReference>
<dbReference type="InterPro" id="IPR001185">
    <property type="entry name" value="MS_channel"/>
</dbReference>
<dbReference type="InterPro" id="IPR037673">
    <property type="entry name" value="MSC/AndL"/>
</dbReference>
<dbReference type="InterPro" id="IPR036019">
    <property type="entry name" value="MscL_channel"/>
</dbReference>
<dbReference type="NCBIfam" id="TIGR00220">
    <property type="entry name" value="mscL"/>
    <property type="match status" value="1"/>
</dbReference>
<dbReference type="NCBIfam" id="NF001842">
    <property type="entry name" value="PRK00567.1-3"/>
    <property type="match status" value="1"/>
</dbReference>
<dbReference type="PANTHER" id="PTHR30266:SF2">
    <property type="entry name" value="LARGE-CONDUCTANCE MECHANOSENSITIVE CHANNEL"/>
    <property type="match status" value="1"/>
</dbReference>
<dbReference type="PANTHER" id="PTHR30266">
    <property type="entry name" value="MECHANOSENSITIVE CHANNEL MSCL"/>
    <property type="match status" value="1"/>
</dbReference>
<dbReference type="Pfam" id="PF01741">
    <property type="entry name" value="MscL"/>
    <property type="match status" value="1"/>
</dbReference>
<dbReference type="PRINTS" id="PR01264">
    <property type="entry name" value="MECHCHANNEL"/>
</dbReference>
<dbReference type="SUPFAM" id="SSF81330">
    <property type="entry name" value="Gated mechanosensitive channel"/>
    <property type="match status" value="1"/>
</dbReference>
<dbReference type="PROSITE" id="PS01327">
    <property type="entry name" value="MSCL"/>
    <property type="match status" value="1"/>
</dbReference>
<keyword id="KW-1003">Cell membrane</keyword>
<keyword id="KW-0407">Ion channel</keyword>
<keyword id="KW-0406">Ion transport</keyword>
<keyword id="KW-0472">Membrane</keyword>
<keyword id="KW-0812">Transmembrane</keyword>
<keyword id="KW-1133">Transmembrane helix</keyword>
<keyword id="KW-0813">Transport</keyword>
<name>MSCL_LACLS</name>